<keyword id="KW-0238">DNA-binding</keyword>
<keyword id="KW-0479">Metal-binding</keyword>
<keyword id="KW-0539">Nucleus</keyword>
<keyword id="KW-1185">Reference proteome</keyword>
<keyword id="KW-0804">Transcription</keyword>
<keyword id="KW-0805">Transcription regulation</keyword>
<keyword id="KW-0862">Zinc</keyword>
<protein>
    <recommendedName>
        <fullName evidence="7">Transcriptional regulator LovE</fullName>
    </recommendedName>
    <alternativeName>
        <fullName evidence="7">Lovastatin biosynthesis cluster protein E</fullName>
    </alternativeName>
</protein>
<dbReference type="EMBL" id="CH476609">
    <property type="protein sequence ID" value="EAU29415.1"/>
    <property type="molecule type" value="Genomic_DNA"/>
</dbReference>
<dbReference type="RefSeq" id="XP_001209268.1">
    <property type="nucleotide sequence ID" value="XM_001209268.1"/>
</dbReference>
<dbReference type="SMR" id="Q0C8L8"/>
<dbReference type="STRING" id="341663.Q0C8L8"/>
<dbReference type="EnsemblFungi" id="EAU29415">
    <property type="protein sequence ID" value="EAU29415"/>
    <property type="gene ID" value="ATEG_09966"/>
</dbReference>
<dbReference type="GeneID" id="4319612"/>
<dbReference type="VEuPathDB" id="FungiDB:ATEG_09966"/>
<dbReference type="HOGENOM" id="CLU_639350_0_0_1"/>
<dbReference type="OMA" id="EACARCQ"/>
<dbReference type="OrthoDB" id="4330117at2759"/>
<dbReference type="Proteomes" id="UP000007963">
    <property type="component" value="Unassembled WGS sequence"/>
</dbReference>
<dbReference type="GO" id="GO:0005634">
    <property type="term" value="C:nucleus"/>
    <property type="evidence" value="ECO:0007669"/>
    <property type="project" value="UniProtKB-SubCell"/>
</dbReference>
<dbReference type="GO" id="GO:0003677">
    <property type="term" value="F:DNA binding"/>
    <property type="evidence" value="ECO:0007669"/>
    <property type="project" value="UniProtKB-KW"/>
</dbReference>
<dbReference type="GO" id="GO:0000981">
    <property type="term" value="F:DNA-binding transcription factor activity, RNA polymerase II-specific"/>
    <property type="evidence" value="ECO:0007669"/>
    <property type="project" value="InterPro"/>
</dbReference>
<dbReference type="GO" id="GO:0008270">
    <property type="term" value="F:zinc ion binding"/>
    <property type="evidence" value="ECO:0007669"/>
    <property type="project" value="InterPro"/>
</dbReference>
<dbReference type="GO" id="GO:0009893">
    <property type="term" value="P:positive regulation of metabolic process"/>
    <property type="evidence" value="ECO:0007669"/>
    <property type="project" value="UniProtKB-ARBA"/>
</dbReference>
<dbReference type="CDD" id="cd00067">
    <property type="entry name" value="GAL4"/>
    <property type="match status" value="1"/>
</dbReference>
<dbReference type="Gene3D" id="4.10.240.10">
    <property type="entry name" value="Zn(2)-C6 fungal-type DNA-binding domain"/>
    <property type="match status" value="1"/>
</dbReference>
<dbReference type="InterPro" id="IPR050797">
    <property type="entry name" value="Carb_Metab_Trans_Reg"/>
</dbReference>
<dbReference type="InterPro" id="IPR036864">
    <property type="entry name" value="Zn2-C6_fun-type_DNA-bd_sf"/>
</dbReference>
<dbReference type="InterPro" id="IPR001138">
    <property type="entry name" value="Zn2Cys6_DnaBD"/>
</dbReference>
<dbReference type="PANTHER" id="PTHR31668">
    <property type="entry name" value="GLUCOSE TRANSPORT TRANSCRIPTION REGULATOR RGT1-RELATED-RELATED"/>
    <property type="match status" value="1"/>
</dbReference>
<dbReference type="PANTHER" id="PTHR31668:SF18">
    <property type="entry name" value="MALTOSE FERMENTATION REGULATORY PROTEIN MAL13-RELATED"/>
    <property type="match status" value="1"/>
</dbReference>
<dbReference type="Pfam" id="PF00172">
    <property type="entry name" value="Zn_clus"/>
    <property type="match status" value="1"/>
</dbReference>
<dbReference type="SMART" id="SM00066">
    <property type="entry name" value="GAL4"/>
    <property type="match status" value="1"/>
</dbReference>
<dbReference type="SUPFAM" id="SSF57701">
    <property type="entry name" value="Zn2/Cys6 DNA-binding domain"/>
    <property type="match status" value="1"/>
</dbReference>
<dbReference type="PROSITE" id="PS00463">
    <property type="entry name" value="ZN2_CY6_FUNGAL_1"/>
    <property type="match status" value="1"/>
</dbReference>
<dbReference type="PROSITE" id="PS50048">
    <property type="entry name" value="ZN2_CY6_FUNGAL_2"/>
    <property type="match status" value="1"/>
</dbReference>
<sequence>MAADQGTFTTSVTLSPVEGSRTGGILPRRAFRRSCDRCHAQKIKCTGNKEVTARAPCQRCQQAGLRCVYSERCPKRKLRPSRAADLVSADPDPCLHMSSPPVPSQSLPLDVSESHSSNTSRQFLDPPDSYDWSWTSIGTDEAIDTDCWGLSQCDGGFSCQLEPTLPDLPSPFESTVEKAPLPPVSSDIARAASAQRELFDDLSAVSQELEAILLAVTVEWPKQEIWTRASPHSPTAFPERITQRRHNMWANWLTDLHVFSLDPIGMFFNASRRLLTVLRQQAHADCHQGTLDECLRTKNLFTAVHCYILNVRILTSISELLLSQIRRTQNSHMNPWEGSRSESPSRDDTSSTSGHSSVDTIPDFSEDLPIGELFSYVDPLTHALFSACTTLHVGVQLLRENEITLGVHSAQGIAASISMSGGPGEDIARTGATNSARCEEQPTTPAARVLFMFLSDEGASQEVKSAGSRGRTIAALRRCYEDIFSLARKHKYGMLRDLNNIPP</sequence>
<organism>
    <name type="scientific">Aspergillus terreus (strain NIH 2624 / FGSC A1156)</name>
    <dbReference type="NCBI Taxonomy" id="341663"/>
    <lineage>
        <taxon>Eukaryota</taxon>
        <taxon>Fungi</taxon>
        <taxon>Dikarya</taxon>
        <taxon>Ascomycota</taxon>
        <taxon>Pezizomycotina</taxon>
        <taxon>Eurotiomycetes</taxon>
        <taxon>Eurotiomycetidae</taxon>
        <taxon>Eurotiales</taxon>
        <taxon>Aspergillaceae</taxon>
        <taxon>Aspergillus</taxon>
        <taxon>Aspergillus subgen. Circumdati</taxon>
    </lineage>
</organism>
<name>LOVE_ASPTN</name>
<accession>Q0C8L8</accession>
<gene>
    <name evidence="7" type="primary">lovE</name>
    <name type="ORF">ATEG_09966</name>
</gene>
<evidence type="ECO:0000255" key="1">
    <source>
        <dbReference type="PROSITE-ProRule" id="PRU00227"/>
    </source>
</evidence>
<evidence type="ECO:0000256" key="2">
    <source>
        <dbReference type="SAM" id="MobiDB-lite"/>
    </source>
</evidence>
<evidence type="ECO:0000269" key="3">
    <source>
    </source>
</evidence>
<evidence type="ECO:0000269" key="4">
    <source>
    </source>
</evidence>
<evidence type="ECO:0000269" key="5">
    <source>
    </source>
</evidence>
<evidence type="ECO:0000269" key="6">
    <source>
    </source>
</evidence>
<evidence type="ECO:0000303" key="7">
    <source>
    </source>
</evidence>
<evidence type="ECO:0000305" key="8">
    <source>
    </source>
</evidence>
<comment type="function">
    <text evidence="8">Transcription factor that regulates the expression of the he gene cluster that mediates the biosynthesis of lovastatin (also known as mevinolin, mevacor or monacolin K), a hypolipidemic inhibitor of (3S)-hydroxymethylglutaryl-coenzyme A (HMG-CoA) reductase (HMGR).</text>
</comment>
<comment type="subcellular location">
    <subcellularLocation>
        <location evidence="1">Nucleus</location>
    </subcellularLocation>
</comment>
<comment type="induction">
    <text evidence="3">Highly expressed during the first day of culture on solid medium; thereafter levels decrease but remain high. Expressed at much lower levels in liquid culture.</text>
</comment>
<comment type="biotechnology">
    <text evidence="4 5 6">Lovastatin acts as a hypolipidemic agent that works as inhibitor of (3S)-hydroxymethylglutaryl-coenzyme A (HMG-CoA) reductase (HMGR) which reduces HMG-CoA to mevalonate and is the key step in cholesterol biosynthesis (PubMed:6933445). Lovastatin, simvastatin and related compounds are widely used to treat hypercholesteremia and reduce the risk of cardiovascular disease (PubMed:6933445). Furthermore, statins such as lovastatin were found to be anticancer agents (PubMed:29236027, PubMed:29932104).</text>
</comment>
<proteinExistence type="evidence at protein level"/>
<reference key="1">
    <citation type="submission" date="2005-09" db="EMBL/GenBank/DDBJ databases">
        <title>Annotation of the Aspergillus terreus NIH2624 genome.</title>
        <authorList>
            <person name="Birren B.W."/>
            <person name="Lander E.S."/>
            <person name="Galagan J.E."/>
            <person name="Nusbaum C."/>
            <person name="Devon K."/>
            <person name="Henn M."/>
            <person name="Ma L.-J."/>
            <person name="Jaffe D.B."/>
            <person name="Butler J."/>
            <person name="Alvarez P."/>
            <person name="Gnerre S."/>
            <person name="Grabherr M."/>
            <person name="Kleber M."/>
            <person name="Mauceli E.W."/>
            <person name="Brockman W."/>
            <person name="Rounsley S."/>
            <person name="Young S.K."/>
            <person name="LaButti K."/>
            <person name="Pushparaj V."/>
            <person name="DeCaprio D."/>
            <person name="Crawford M."/>
            <person name="Koehrsen M."/>
            <person name="Engels R."/>
            <person name="Montgomery P."/>
            <person name="Pearson M."/>
            <person name="Howarth C."/>
            <person name="Larson L."/>
            <person name="Luoma S."/>
            <person name="White J."/>
            <person name="Alvarado L."/>
            <person name="Kodira C.D."/>
            <person name="Zeng Q."/>
            <person name="Oleary S."/>
            <person name="Yandava C."/>
            <person name="Denning D.W."/>
            <person name="Nierman W.C."/>
            <person name="Milne T."/>
            <person name="Madden K."/>
        </authorList>
    </citation>
    <scope>NUCLEOTIDE SEQUENCE [LARGE SCALE GENOMIC DNA]</scope>
    <source>
        <strain>NIH 2624 / FGSC A1156</strain>
    </source>
</reference>
<reference key="2">
    <citation type="journal article" date="1999" name="Science">
        <title>Modulation of polyketide synthase activity by accessory proteins during lovastatin biosynthesis.</title>
        <authorList>
            <person name="Kennedy J."/>
            <person name="Auclair K."/>
            <person name="Kendrew S.G."/>
            <person name="Park C."/>
            <person name="Vederas J.C."/>
            <person name="Hutchinson C.R."/>
        </authorList>
    </citation>
    <scope>IDENTIFICATION</scope>
    <scope>PATHWAY</scope>
    <scope>PROBABLE FUNCTION</scope>
</reference>
<reference key="3">
    <citation type="journal article" date="1980" name="Proc. Natl. Acad. Sci. U.S.A.">
        <title>Mevinolin: a highly potent competitive inhibitor of hydroxymethylglutaryl-coenzyme A reductase and a cholesterol-lowering agent.</title>
        <authorList>
            <person name="Alberts A.W."/>
            <person name="Chen J."/>
            <person name="Kuron G."/>
            <person name="Hunt V."/>
            <person name="Huff J."/>
            <person name="Hoffman C."/>
            <person name="Rothrock J."/>
            <person name="Lopez M."/>
            <person name="Joshua H."/>
            <person name="Harris E."/>
            <person name="Patchett A."/>
            <person name="Monaghan R."/>
            <person name="Currie S."/>
            <person name="Stapley E."/>
            <person name="Albers-Schonberg G."/>
            <person name="Hensens O."/>
            <person name="Hirshfield J."/>
            <person name="Hoogsteen K."/>
            <person name="Liesch J."/>
            <person name="Springer J."/>
        </authorList>
    </citation>
    <scope>BIOTECHNOLOGY</scope>
</reference>
<reference key="4">
    <citation type="journal article" date="2008" name="Appl. Microbiol. Biotechnol.">
        <title>Lovastatin biosynthetic genes of Aspergillus terreus are expressed differentially in solid-state and in liquid submerged fermentation.</title>
        <authorList>
            <person name="Barrios-Gonzalez J."/>
            <person name="Banos J.G."/>
            <person name="Covarrubias A.A."/>
            <person name="Garay-Arroyo A."/>
        </authorList>
    </citation>
    <scope>INDUCTION</scope>
    <scope>PROBABLE FUNCTION</scope>
</reference>
<reference key="5">
    <citation type="journal article" date="2009" name="Chin. Med. J.">
        <title>Cloning and bioinformatic analysis of lovastatin biosynthesis regulatory gene lovE.</title>
        <authorList>
            <person name="Huang X."/>
            <person name="Li H.M."/>
        </authorList>
    </citation>
    <scope>IDENTIFICATION</scope>
</reference>
<reference key="6">
    <citation type="journal article" date="2017" name="Int. J. Mol. Sci.">
        <title>Simvastatin inhibits cell proliferation and migration in human anaplastic thyroid cancer.</title>
        <authorList>
            <person name="Chen M.C."/>
            <person name="Tsai Y.C."/>
            <person name="Tseng J.H."/>
            <person name="Liou J.J."/>
            <person name="Horng S."/>
            <person name="Wen H.C."/>
            <person name="Fan Y.C."/>
            <person name="Zhong W.B."/>
            <person name="Hsu S.P."/>
        </authorList>
    </citation>
    <scope>BIOTECHNOLOGY</scope>
</reference>
<reference key="7">
    <citation type="journal article" date="2018" name="Int. J. Mol. Sci.">
        <title>A synergistic anti-cancer effect of troglitazone and lovastatin in a human anaplastic thyroid cancer cell line and in a mouse xenograft model.</title>
        <authorList>
            <person name="Zhong W.B."/>
            <person name="Tsai Y.C."/>
            <person name="Chin L.H."/>
            <person name="Tseng J.H."/>
            <person name="Tang L.W."/>
            <person name="Horng S."/>
            <person name="Fan Y.C."/>
            <person name="Hsu S.P."/>
        </authorList>
    </citation>
    <scope>BIOTECHNOLOGY</scope>
</reference>
<feature type="chain" id="PRO_0000449661" description="Transcriptional regulator LovE">
    <location>
        <begin position="1"/>
        <end position="503"/>
    </location>
</feature>
<feature type="DNA-binding region" description="Zn(2)-C6 fungal-type" evidence="1">
    <location>
        <begin position="35"/>
        <end position="67"/>
    </location>
</feature>
<feature type="region of interest" description="Disordered" evidence="2">
    <location>
        <begin position="1"/>
        <end position="21"/>
    </location>
</feature>
<feature type="region of interest" description="Disordered" evidence="2">
    <location>
        <begin position="89"/>
        <end position="124"/>
    </location>
</feature>
<feature type="region of interest" description="Disordered" evidence="2">
    <location>
        <begin position="331"/>
        <end position="362"/>
    </location>
</feature>
<feature type="compositionally biased region" description="Polar residues" evidence="2">
    <location>
        <begin position="1"/>
        <end position="14"/>
    </location>
</feature>
<feature type="compositionally biased region" description="Basic and acidic residues" evidence="2">
    <location>
        <begin position="339"/>
        <end position="349"/>
    </location>
</feature>
<feature type="compositionally biased region" description="Polar residues" evidence="2">
    <location>
        <begin position="350"/>
        <end position="359"/>
    </location>
</feature>